<proteinExistence type="inferred from homology"/>
<evidence type="ECO:0000255" key="1">
    <source>
        <dbReference type="HAMAP-Rule" id="MF_01562"/>
    </source>
</evidence>
<gene>
    <name evidence="1" type="primary">floA</name>
    <name type="ordered locus">BF1143</name>
</gene>
<feature type="chain" id="PRO_0000232550" description="Flotillin-like protein FloA">
    <location>
        <begin position="1"/>
        <end position="333"/>
    </location>
</feature>
<feature type="transmembrane region" description="Helical" evidence="1">
    <location>
        <begin position="10"/>
        <end position="30"/>
    </location>
</feature>
<protein>
    <recommendedName>
        <fullName evidence="1">Flotillin-like protein FloA</fullName>
    </recommendedName>
</protein>
<accession>Q5LG75</accession>
<sequence>MNVEPMYLTIFLIAGGIIFLVLFFHYVPFFLWLSAKVSGVNISLVQLFLMRIRNVPPYIIVPGMIEAHKAGLSNITRDELEAHYLAGGHVERVVHALVSASKANIELPFQMATAIDLAGRDVFEAVQMSVNPKVIDTPPVTAVAKDGIQLIAKARVTVRANIRQLVGGAGEDTILARVGEGIVSSIGSSENHKSVLENPDSISKLVLRKGLDAGTAFEILSIDIADIDIGKNIGAALQIDQANADKNIAQAKAEERRAMAVATEQEMKAKAEEARANVIQAEAEVPKAMAEAFRSGNLGIMDYYKMKNIQADTSMRENIAKPIGGATSKPLSD</sequence>
<reference key="1">
    <citation type="journal article" date="2005" name="Science">
        <title>Extensive DNA inversions in the B. fragilis genome control variable gene expression.</title>
        <authorList>
            <person name="Cerdeno-Tarraga A.-M."/>
            <person name="Patrick S."/>
            <person name="Crossman L.C."/>
            <person name="Blakely G."/>
            <person name="Abratt V."/>
            <person name="Lennard N."/>
            <person name="Poxton I."/>
            <person name="Duerden B."/>
            <person name="Harris B."/>
            <person name="Quail M.A."/>
            <person name="Barron A."/>
            <person name="Clark L."/>
            <person name="Corton C."/>
            <person name="Doggett J."/>
            <person name="Holden M.T.G."/>
            <person name="Larke N."/>
            <person name="Line A."/>
            <person name="Lord A."/>
            <person name="Norbertczak H."/>
            <person name="Ormond D."/>
            <person name="Price C."/>
            <person name="Rabbinowitsch E."/>
            <person name="Woodward J."/>
            <person name="Barrell B.G."/>
            <person name="Parkhill J."/>
        </authorList>
    </citation>
    <scope>NUCLEOTIDE SEQUENCE [LARGE SCALE GENOMIC DNA]</scope>
    <source>
        <strain>ATCC 25285 / DSM 2151 / CCUG 4856 / JCM 11019 / LMG 10263 / NCTC 9343 / Onslow / VPI 2553 / EN-2</strain>
    </source>
</reference>
<keyword id="KW-1003">Cell membrane</keyword>
<keyword id="KW-0472">Membrane</keyword>
<keyword id="KW-0812">Transmembrane</keyword>
<keyword id="KW-1133">Transmembrane helix</keyword>
<name>FLOA_BACFN</name>
<dbReference type="EMBL" id="CR626927">
    <property type="protein sequence ID" value="CAH06866.1"/>
    <property type="molecule type" value="Genomic_DNA"/>
</dbReference>
<dbReference type="RefSeq" id="WP_005785715.1">
    <property type="nucleotide sequence ID" value="NZ_UFTH01000001.1"/>
</dbReference>
<dbReference type="SMR" id="Q5LG75"/>
<dbReference type="PaxDb" id="272559-BF9343_1085"/>
<dbReference type="GeneID" id="60369092"/>
<dbReference type="KEGG" id="bfs:BF9343_1085"/>
<dbReference type="eggNOG" id="COG4864">
    <property type="taxonomic scope" value="Bacteria"/>
</dbReference>
<dbReference type="HOGENOM" id="CLU_836378_0_0_10"/>
<dbReference type="Proteomes" id="UP000006731">
    <property type="component" value="Chromosome"/>
</dbReference>
<dbReference type="GO" id="GO:0045121">
    <property type="term" value="C:membrane raft"/>
    <property type="evidence" value="ECO:0007669"/>
    <property type="project" value="UniProtKB-SubCell"/>
</dbReference>
<dbReference type="GO" id="GO:0005886">
    <property type="term" value="C:plasma membrane"/>
    <property type="evidence" value="ECO:0007669"/>
    <property type="project" value="UniProtKB-SubCell"/>
</dbReference>
<dbReference type="HAMAP" id="MF_01562">
    <property type="entry name" value="FloA"/>
    <property type="match status" value="1"/>
</dbReference>
<dbReference type="InterPro" id="IPR022853">
    <property type="entry name" value="FloA"/>
</dbReference>
<dbReference type="NCBIfam" id="NF010186">
    <property type="entry name" value="PRK13665.1"/>
    <property type="match status" value="1"/>
</dbReference>
<dbReference type="Pfam" id="PF12127">
    <property type="entry name" value="FloA"/>
    <property type="match status" value="1"/>
</dbReference>
<organism>
    <name type="scientific">Bacteroides fragilis (strain ATCC 25285 / DSM 2151 / CCUG 4856 / JCM 11019 / LMG 10263 / NCTC 9343 / Onslow / VPI 2553 / EN-2)</name>
    <dbReference type="NCBI Taxonomy" id="272559"/>
    <lineage>
        <taxon>Bacteria</taxon>
        <taxon>Pseudomonadati</taxon>
        <taxon>Bacteroidota</taxon>
        <taxon>Bacteroidia</taxon>
        <taxon>Bacteroidales</taxon>
        <taxon>Bacteroidaceae</taxon>
        <taxon>Bacteroides</taxon>
    </lineage>
</organism>
<comment type="function">
    <text evidence="1">Found in functional membrane microdomains (FMM) that may be equivalent to eukaryotic membrane rafts. FMMs are highly dynamic and increase in number as cells age. Flotillins are thought to be important factors in membrane fluidity.</text>
</comment>
<comment type="subunit">
    <text evidence="1">Homooligomerizes.</text>
</comment>
<comment type="subcellular location">
    <subcellularLocation>
        <location evidence="1">Cell membrane</location>
        <topology evidence="1">Single-pass membrane protein</topology>
    </subcellularLocation>
    <subcellularLocation>
        <location evidence="1">Membrane raft</location>
        <topology evidence="1">Single-pass membrane protein</topology>
    </subcellularLocation>
</comment>
<comment type="similarity">
    <text evidence="1">Belongs to the flotillin-like FloA family.</text>
</comment>